<feature type="chain" id="PRO_0000188427" description="Glycerol-3-phosphate acyltransferase">
    <location>
        <begin position="1"/>
        <end position="203"/>
    </location>
</feature>
<feature type="transmembrane region" description="Helical" evidence="1">
    <location>
        <begin position="2"/>
        <end position="22"/>
    </location>
</feature>
<feature type="transmembrane region" description="Helical" evidence="1">
    <location>
        <begin position="54"/>
        <end position="74"/>
    </location>
</feature>
<feature type="transmembrane region" description="Helical" evidence="1">
    <location>
        <begin position="80"/>
        <end position="100"/>
    </location>
</feature>
<feature type="transmembrane region" description="Helical" evidence="1">
    <location>
        <begin position="114"/>
        <end position="134"/>
    </location>
</feature>
<feature type="transmembrane region" description="Helical" evidence="1">
    <location>
        <begin position="153"/>
        <end position="173"/>
    </location>
</feature>
<proteinExistence type="inferred from homology"/>
<comment type="function">
    <text evidence="1">Catalyzes the transfer of an acyl group from acyl-phosphate (acyl-PO(4)) to glycerol-3-phosphate (G3P) to form lysophosphatidic acid (LPA). This enzyme utilizes acyl-phosphate as fatty acyl donor, but not acyl-CoA or acyl-ACP.</text>
</comment>
<comment type="catalytic activity">
    <reaction evidence="1">
        <text>an acyl phosphate + sn-glycerol 3-phosphate = a 1-acyl-sn-glycero-3-phosphate + phosphate</text>
        <dbReference type="Rhea" id="RHEA:34075"/>
        <dbReference type="ChEBI" id="CHEBI:43474"/>
        <dbReference type="ChEBI" id="CHEBI:57597"/>
        <dbReference type="ChEBI" id="CHEBI:57970"/>
        <dbReference type="ChEBI" id="CHEBI:59918"/>
        <dbReference type="EC" id="2.3.1.275"/>
    </reaction>
</comment>
<comment type="pathway">
    <text evidence="1">Lipid metabolism; phospholipid metabolism.</text>
</comment>
<comment type="subunit">
    <text evidence="1">Probably interacts with PlsX.</text>
</comment>
<comment type="subcellular location">
    <subcellularLocation>
        <location evidence="1">Cell inner membrane</location>
        <topology evidence="1">Multi-pass membrane protein</topology>
    </subcellularLocation>
</comment>
<comment type="similarity">
    <text evidence="1">Belongs to the PlsY family.</text>
</comment>
<reference key="1">
    <citation type="journal article" date="2005" name="Genome Res.">
        <title>Coping with cold: the genome of the versatile marine Antarctica bacterium Pseudoalteromonas haloplanktis TAC125.</title>
        <authorList>
            <person name="Medigue C."/>
            <person name="Krin E."/>
            <person name="Pascal G."/>
            <person name="Barbe V."/>
            <person name="Bernsel A."/>
            <person name="Bertin P.N."/>
            <person name="Cheung F."/>
            <person name="Cruveiller S."/>
            <person name="D'Amico S."/>
            <person name="Duilio A."/>
            <person name="Fang G."/>
            <person name="Feller G."/>
            <person name="Ho C."/>
            <person name="Mangenot S."/>
            <person name="Marino G."/>
            <person name="Nilsson J."/>
            <person name="Parrilli E."/>
            <person name="Rocha E.P.C."/>
            <person name="Rouy Z."/>
            <person name="Sekowska A."/>
            <person name="Tutino M.L."/>
            <person name="Vallenet D."/>
            <person name="von Heijne G."/>
            <person name="Danchin A."/>
        </authorList>
    </citation>
    <scope>NUCLEOTIDE SEQUENCE [LARGE SCALE GENOMIC DNA]</scope>
    <source>
        <strain>TAC 125</strain>
    </source>
</reference>
<accession>Q3IHX2</accession>
<gene>
    <name evidence="1" type="primary">plsY</name>
    <name type="ordered locus">PSHAa2303</name>
</gene>
<protein>
    <recommendedName>
        <fullName evidence="1">Glycerol-3-phosphate acyltransferase</fullName>
    </recommendedName>
    <alternativeName>
        <fullName evidence="1">Acyl-PO4 G3P acyltransferase</fullName>
    </alternativeName>
    <alternativeName>
        <fullName evidence="1">Acyl-phosphate--glycerol-3-phosphate acyltransferase</fullName>
    </alternativeName>
    <alternativeName>
        <fullName evidence="1">G3P acyltransferase</fullName>
        <shortName evidence="1">GPAT</shortName>
        <ecNumber evidence="1">2.3.1.275</ecNumber>
    </alternativeName>
    <alternativeName>
        <fullName evidence="1">Lysophosphatidic acid synthase</fullName>
        <shortName evidence="1">LPA synthase</shortName>
    </alternativeName>
</protein>
<evidence type="ECO:0000255" key="1">
    <source>
        <dbReference type="HAMAP-Rule" id="MF_01043"/>
    </source>
</evidence>
<keyword id="KW-0997">Cell inner membrane</keyword>
<keyword id="KW-1003">Cell membrane</keyword>
<keyword id="KW-0444">Lipid biosynthesis</keyword>
<keyword id="KW-0443">Lipid metabolism</keyword>
<keyword id="KW-0472">Membrane</keyword>
<keyword id="KW-0594">Phospholipid biosynthesis</keyword>
<keyword id="KW-1208">Phospholipid metabolism</keyword>
<keyword id="KW-1185">Reference proteome</keyword>
<keyword id="KW-0808">Transferase</keyword>
<keyword id="KW-0812">Transmembrane</keyword>
<keyword id="KW-1133">Transmembrane helix</keyword>
<name>PLSY_PSET1</name>
<sequence length="203" mass="21716">MLATLMFILAYLLGSISSAILVSRLFKLPDPRSNGSNNPGATNVYRLGGALPACLVLIFDVLKGTIPVWGAYFLDLEPLALGLVAVAACLGHMFPLFFGFKGGKAVATAFGSLLPIGLSLAGLLICTWFIMVAITRYSSLAALVAVSLAPLYTWLIKPLYTLPVTFITVLIIFRHRSNIARLFSGNEPKVGAKKAPTDEKSDI</sequence>
<organism>
    <name type="scientific">Pseudoalteromonas translucida (strain TAC 125)</name>
    <dbReference type="NCBI Taxonomy" id="326442"/>
    <lineage>
        <taxon>Bacteria</taxon>
        <taxon>Pseudomonadati</taxon>
        <taxon>Pseudomonadota</taxon>
        <taxon>Gammaproteobacteria</taxon>
        <taxon>Alteromonadales</taxon>
        <taxon>Pseudoalteromonadaceae</taxon>
        <taxon>Pseudoalteromonas</taxon>
    </lineage>
</organism>
<dbReference type="EC" id="2.3.1.275" evidence="1"/>
<dbReference type="EMBL" id="CR954246">
    <property type="protein sequence ID" value="CAI87359.1"/>
    <property type="molecule type" value="Genomic_DNA"/>
</dbReference>
<dbReference type="SMR" id="Q3IHX2"/>
<dbReference type="STRING" id="326442.PSHAa2303"/>
<dbReference type="KEGG" id="pha:PSHAa2303"/>
<dbReference type="PATRIC" id="fig|326442.8.peg.2223"/>
<dbReference type="eggNOG" id="COG0344">
    <property type="taxonomic scope" value="Bacteria"/>
</dbReference>
<dbReference type="HOGENOM" id="CLU_081254_0_2_6"/>
<dbReference type="BioCyc" id="PHAL326442:PSHA_RS11360-MONOMER"/>
<dbReference type="UniPathway" id="UPA00085"/>
<dbReference type="Proteomes" id="UP000006843">
    <property type="component" value="Chromosome I"/>
</dbReference>
<dbReference type="GO" id="GO:0005886">
    <property type="term" value="C:plasma membrane"/>
    <property type="evidence" value="ECO:0007669"/>
    <property type="project" value="UniProtKB-SubCell"/>
</dbReference>
<dbReference type="GO" id="GO:0043772">
    <property type="term" value="F:acyl-phosphate glycerol-3-phosphate acyltransferase activity"/>
    <property type="evidence" value="ECO:0007669"/>
    <property type="project" value="UniProtKB-UniRule"/>
</dbReference>
<dbReference type="GO" id="GO:0008654">
    <property type="term" value="P:phospholipid biosynthetic process"/>
    <property type="evidence" value="ECO:0007669"/>
    <property type="project" value="UniProtKB-UniRule"/>
</dbReference>
<dbReference type="HAMAP" id="MF_01043">
    <property type="entry name" value="PlsY"/>
    <property type="match status" value="1"/>
</dbReference>
<dbReference type="InterPro" id="IPR003811">
    <property type="entry name" value="G3P_acylTferase_PlsY"/>
</dbReference>
<dbReference type="NCBIfam" id="TIGR00023">
    <property type="entry name" value="glycerol-3-phosphate 1-O-acyltransferase PlsY"/>
    <property type="match status" value="1"/>
</dbReference>
<dbReference type="PANTHER" id="PTHR30309:SF0">
    <property type="entry name" value="GLYCEROL-3-PHOSPHATE ACYLTRANSFERASE-RELATED"/>
    <property type="match status" value="1"/>
</dbReference>
<dbReference type="PANTHER" id="PTHR30309">
    <property type="entry name" value="INNER MEMBRANE PROTEIN YGIH"/>
    <property type="match status" value="1"/>
</dbReference>
<dbReference type="Pfam" id="PF02660">
    <property type="entry name" value="G3P_acyltransf"/>
    <property type="match status" value="1"/>
</dbReference>
<dbReference type="SMART" id="SM01207">
    <property type="entry name" value="G3P_acyltransf"/>
    <property type="match status" value="1"/>
</dbReference>